<evidence type="ECO:0000255" key="1">
    <source>
        <dbReference type="HAMAP-Rule" id="MF_00020"/>
    </source>
</evidence>
<dbReference type="EC" id="2.7.2.1" evidence="1"/>
<dbReference type="EMBL" id="CP001100">
    <property type="protein sequence ID" value="ACF12981.1"/>
    <property type="molecule type" value="Genomic_DNA"/>
</dbReference>
<dbReference type="RefSeq" id="WP_012499065.1">
    <property type="nucleotide sequence ID" value="NC_011026.1"/>
</dbReference>
<dbReference type="SMR" id="B3QV27"/>
<dbReference type="STRING" id="517418.Ctha_0510"/>
<dbReference type="KEGG" id="cts:Ctha_0510"/>
<dbReference type="eggNOG" id="COG0282">
    <property type="taxonomic scope" value="Bacteria"/>
</dbReference>
<dbReference type="HOGENOM" id="CLU_020352_0_1_10"/>
<dbReference type="OrthoDB" id="9802453at2"/>
<dbReference type="UniPathway" id="UPA00340">
    <property type="reaction ID" value="UER00458"/>
</dbReference>
<dbReference type="Proteomes" id="UP000001208">
    <property type="component" value="Chromosome"/>
</dbReference>
<dbReference type="GO" id="GO:0005737">
    <property type="term" value="C:cytoplasm"/>
    <property type="evidence" value="ECO:0007669"/>
    <property type="project" value="UniProtKB-SubCell"/>
</dbReference>
<dbReference type="GO" id="GO:0008776">
    <property type="term" value="F:acetate kinase activity"/>
    <property type="evidence" value="ECO:0007669"/>
    <property type="project" value="UniProtKB-UniRule"/>
</dbReference>
<dbReference type="GO" id="GO:0005524">
    <property type="term" value="F:ATP binding"/>
    <property type="evidence" value="ECO:0007669"/>
    <property type="project" value="UniProtKB-KW"/>
</dbReference>
<dbReference type="GO" id="GO:0000287">
    <property type="term" value="F:magnesium ion binding"/>
    <property type="evidence" value="ECO:0007669"/>
    <property type="project" value="UniProtKB-UniRule"/>
</dbReference>
<dbReference type="GO" id="GO:0006083">
    <property type="term" value="P:acetate metabolic process"/>
    <property type="evidence" value="ECO:0007669"/>
    <property type="project" value="TreeGrafter"/>
</dbReference>
<dbReference type="GO" id="GO:0006085">
    <property type="term" value="P:acetyl-CoA biosynthetic process"/>
    <property type="evidence" value="ECO:0007669"/>
    <property type="project" value="UniProtKB-UniRule"/>
</dbReference>
<dbReference type="CDD" id="cd24010">
    <property type="entry name" value="ASKHA_NBD_AcK_PK"/>
    <property type="match status" value="1"/>
</dbReference>
<dbReference type="Gene3D" id="3.30.420.40">
    <property type="match status" value="2"/>
</dbReference>
<dbReference type="HAMAP" id="MF_00020">
    <property type="entry name" value="Acetate_kinase"/>
    <property type="match status" value="1"/>
</dbReference>
<dbReference type="InterPro" id="IPR004372">
    <property type="entry name" value="Ac/propionate_kinase"/>
</dbReference>
<dbReference type="InterPro" id="IPR000890">
    <property type="entry name" value="Aliphatic_acid_kin_short-chain"/>
</dbReference>
<dbReference type="InterPro" id="IPR023865">
    <property type="entry name" value="Aliphatic_acid_kinase_CS"/>
</dbReference>
<dbReference type="InterPro" id="IPR043129">
    <property type="entry name" value="ATPase_NBD"/>
</dbReference>
<dbReference type="NCBIfam" id="TIGR00016">
    <property type="entry name" value="ackA"/>
    <property type="match status" value="1"/>
</dbReference>
<dbReference type="PANTHER" id="PTHR21060">
    <property type="entry name" value="ACETATE KINASE"/>
    <property type="match status" value="1"/>
</dbReference>
<dbReference type="PANTHER" id="PTHR21060:SF15">
    <property type="entry name" value="ACETATE KINASE-RELATED"/>
    <property type="match status" value="1"/>
</dbReference>
<dbReference type="Pfam" id="PF00871">
    <property type="entry name" value="Acetate_kinase"/>
    <property type="match status" value="1"/>
</dbReference>
<dbReference type="PIRSF" id="PIRSF000722">
    <property type="entry name" value="Acetate_prop_kin"/>
    <property type="match status" value="1"/>
</dbReference>
<dbReference type="PRINTS" id="PR00471">
    <property type="entry name" value="ACETATEKNASE"/>
</dbReference>
<dbReference type="SUPFAM" id="SSF53067">
    <property type="entry name" value="Actin-like ATPase domain"/>
    <property type="match status" value="2"/>
</dbReference>
<dbReference type="PROSITE" id="PS01075">
    <property type="entry name" value="ACETATE_KINASE_1"/>
    <property type="match status" value="1"/>
</dbReference>
<dbReference type="PROSITE" id="PS01076">
    <property type="entry name" value="ACETATE_KINASE_2"/>
    <property type="match status" value="1"/>
</dbReference>
<gene>
    <name evidence="1" type="primary">ackA</name>
    <name type="ordered locus">Ctha_0510</name>
</gene>
<accession>B3QV27</accession>
<reference key="1">
    <citation type="submission" date="2008-06" db="EMBL/GenBank/DDBJ databases">
        <title>Complete sequence of Chloroherpeton thalassium ATCC 35110.</title>
        <authorList>
            <consortium name="US DOE Joint Genome Institute"/>
            <person name="Lucas S."/>
            <person name="Copeland A."/>
            <person name="Lapidus A."/>
            <person name="Glavina del Rio T."/>
            <person name="Dalin E."/>
            <person name="Tice H."/>
            <person name="Bruce D."/>
            <person name="Goodwin L."/>
            <person name="Pitluck S."/>
            <person name="Schmutz J."/>
            <person name="Larimer F."/>
            <person name="Land M."/>
            <person name="Hauser L."/>
            <person name="Kyrpides N."/>
            <person name="Mikhailova N."/>
            <person name="Liu Z."/>
            <person name="Li T."/>
            <person name="Zhao F."/>
            <person name="Overmann J."/>
            <person name="Bryant D.A."/>
            <person name="Richardson P."/>
        </authorList>
    </citation>
    <scope>NUCLEOTIDE SEQUENCE [LARGE SCALE GENOMIC DNA]</scope>
    <source>
        <strain>ATCC 35110 / GB-78</strain>
    </source>
</reference>
<feature type="chain" id="PRO_1000089965" description="Acetate kinase">
    <location>
        <begin position="1"/>
        <end position="417"/>
    </location>
</feature>
<feature type="active site" description="Proton donor/acceptor" evidence="1">
    <location>
        <position position="162"/>
    </location>
</feature>
<feature type="binding site" evidence="1">
    <location>
        <position position="7"/>
    </location>
    <ligand>
        <name>Mg(2+)</name>
        <dbReference type="ChEBI" id="CHEBI:18420"/>
    </ligand>
</feature>
<feature type="binding site" evidence="1">
    <location>
        <position position="14"/>
    </location>
    <ligand>
        <name>ATP</name>
        <dbReference type="ChEBI" id="CHEBI:30616"/>
    </ligand>
</feature>
<feature type="binding site" evidence="1">
    <location>
        <position position="104"/>
    </location>
    <ligand>
        <name>substrate</name>
    </ligand>
</feature>
<feature type="binding site" evidence="1">
    <location>
        <begin position="222"/>
        <end position="226"/>
    </location>
    <ligand>
        <name>ATP</name>
        <dbReference type="ChEBI" id="CHEBI:30616"/>
    </ligand>
</feature>
<feature type="binding site" evidence="1">
    <location>
        <begin position="297"/>
        <end position="299"/>
    </location>
    <ligand>
        <name>ATP</name>
        <dbReference type="ChEBI" id="CHEBI:30616"/>
    </ligand>
</feature>
<feature type="binding site" evidence="1">
    <location>
        <begin position="346"/>
        <end position="350"/>
    </location>
    <ligand>
        <name>ATP</name>
        <dbReference type="ChEBI" id="CHEBI:30616"/>
    </ligand>
</feature>
<feature type="binding site" evidence="1">
    <location>
        <position position="401"/>
    </location>
    <ligand>
        <name>Mg(2+)</name>
        <dbReference type="ChEBI" id="CHEBI:18420"/>
    </ligand>
</feature>
<feature type="site" description="Transition state stabilizer" evidence="1">
    <location>
        <position position="194"/>
    </location>
</feature>
<feature type="site" description="Transition state stabilizer" evidence="1">
    <location>
        <position position="255"/>
    </location>
</feature>
<organism>
    <name type="scientific">Chloroherpeton thalassium (strain ATCC 35110 / GB-78)</name>
    <dbReference type="NCBI Taxonomy" id="517418"/>
    <lineage>
        <taxon>Bacteria</taxon>
        <taxon>Pseudomonadati</taxon>
        <taxon>Chlorobiota</taxon>
        <taxon>Chlorobiia</taxon>
        <taxon>Chlorobiales</taxon>
        <taxon>Chloroherpetonaceae</taxon>
        <taxon>Chloroherpeton</taxon>
    </lineage>
</organism>
<sequence length="417" mass="46581">MNILVLNCGSSSVKFRLIHTYFDLIRENKDYSIASGLIERVGSEGLLSFRSTNAQGEVLSTLRTTAPVRTHQAAIDQIIKWITSENSGIQGIQSLEDIHAVGHRVVHGGEKLTRSVLIDDSVVEQIEDCIELAPLHNPQNLKGIYAAKKTFGPNIPQVAVFDTAFHHTLPDHAYLYALPYQIYRRHRIRRYGFHGLSHRYVRFRYRTILGMERENVNIISLHLGNGCSACAIKNGNSIDTSMGMTPLEGLVMGTRAGDVDPAILTYLAHKEGHSLDDLDKLLNSQSGLLGISGLTNDMRELIEESLENDDRRAKLALEIFAYRIKKYVGAYLSAMNGADAIIFTGGIGENADFIRQKICAGMNWCGIEIDENLNKQTTRGREGRISPDGNKPEVWVIPTNEELVIARDTYRCVMRKE</sequence>
<keyword id="KW-0067">ATP-binding</keyword>
<keyword id="KW-0963">Cytoplasm</keyword>
<keyword id="KW-0418">Kinase</keyword>
<keyword id="KW-0460">Magnesium</keyword>
<keyword id="KW-0479">Metal-binding</keyword>
<keyword id="KW-0547">Nucleotide-binding</keyword>
<keyword id="KW-1185">Reference proteome</keyword>
<keyword id="KW-0808">Transferase</keyword>
<name>ACKA_CHLT3</name>
<proteinExistence type="inferred from homology"/>
<comment type="function">
    <text evidence="1">Catalyzes the formation of acetyl phosphate from acetate and ATP. Can also catalyze the reverse reaction.</text>
</comment>
<comment type="catalytic activity">
    <reaction evidence="1">
        <text>acetate + ATP = acetyl phosphate + ADP</text>
        <dbReference type="Rhea" id="RHEA:11352"/>
        <dbReference type="ChEBI" id="CHEBI:22191"/>
        <dbReference type="ChEBI" id="CHEBI:30089"/>
        <dbReference type="ChEBI" id="CHEBI:30616"/>
        <dbReference type="ChEBI" id="CHEBI:456216"/>
        <dbReference type="EC" id="2.7.2.1"/>
    </reaction>
</comment>
<comment type="cofactor">
    <cofactor evidence="1">
        <name>Mg(2+)</name>
        <dbReference type="ChEBI" id="CHEBI:18420"/>
    </cofactor>
    <cofactor evidence="1">
        <name>Mn(2+)</name>
        <dbReference type="ChEBI" id="CHEBI:29035"/>
    </cofactor>
    <text evidence="1">Mg(2+). Can also accept Mn(2+).</text>
</comment>
<comment type="pathway">
    <text evidence="1">Metabolic intermediate biosynthesis; acetyl-CoA biosynthesis; acetyl-CoA from acetate: step 1/2.</text>
</comment>
<comment type="subunit">
    <text evidence="1">Homodimer.</text>
</comment>
<comment type="subcellular location">
    <subcellularLocation>
        <location evidence="1">Cytoplasm</location>
    </subcellularLocation>
</comment>
<comment type="similarity">
    <text evidence="1">Belongs to the acetokinase family.</text>
</comment>
<protein>
    <recommendedName>
        <fullName evidence="1">Acetate kinase</fullName>
        <ecNumber evidence="1">2.7.2.1</ecNumber>
    </recommendedName>
    <alternativeName>
        <fullName evidence="1">Acetokinase</fullName>
    </alternativeName>
</protein>